<reference key="1">
    <citation type="journal article" date="1995" name="Mol. Biol. Evol.">
        <title>A highly conserved nuclear gene for low-level phylogenetics: elongation factor-1 alpha recovers morphology-based tree for heliothine moths.</title>
        <authorList>
            <person name="Cho S."/>
            <person name="Mitchell A."/>
            <person name="Regier J.C."/>
            <person name="Mitter C."/>
            <person name="Poole R.W."/>
            <person name="Friedlander T.P."/>
            <person name="Zhao S."/>
        </authorList>
    </citation>
    <scope>NUCLEOTIDE SEQUENCE [GENOMIC DNA]</scope>
</reference>
<proteinExistence type="inferred from homology"/>
<comment type="function">
    <text>This protein promotes the GTP-dependent binding of aminoacyl-tRNA to the A-site of ribosomes during protein biosynthesis.</text>
</comment>
<comment type="subcellular location">
    <subcellularLocation>
        <location>Cytoplasm</location>
    </subcellularLocation>
</comment>
<comment type="similarity">
    <text evidence="2">Belongs to the TRAFAC class translation factor GTPase superfamily. Classic translation factor GTPase family. EF-Tu/EF-1A subfamily.</text>
</comment>
<name>EF1A_HELGL</name>
<evidence type="ECO:0000250" key="1"/>
<evidence type="ECO:0000255" key="2">
    <source>
        <dbReference type="PROSITE-ProRule" id="PRU01059"/>
    </source>
</evidence>
<accession>P84318</accession>
<accession>P55276</accession>
<dbReference type="EMBL" id="U20132">
    <property type="protein sequence ID" value="AAA93212.1"/>
    <property type="molecule type" value="Genomic_DNA"/>
</dbReference>
<dbReference type="SMR" id="P84318"/>
<dbReference type="GO" id="GO:0005737">
    <property type="term" value="C:cytoplasm"/>
    <property type="evidence" value="ECO:0007669"/>
    <property type="project" value="UniProtKB-SubCell"/>
</dbReference>
<dbReference type="GO" id="GO:0005525">
    <property type="term" value="F:GTP binding"/>
    <property type="evidence" value="ECO:0007669"/>
    <property type="project" value="UniProtKB-KW"/>
</dbReference>
<dbReference type="GO" id="GO:0003924">
    <property type="term" value="F:GTPase activity"/>
    <property type="evidence" value="ECO:0007669"/>
    <property type="project" value="InterPro"/>
</dbReference>
<dbReference type="GO" id="GO:0003746">
    <property type="term" value="F:translation elongation factor activity"/>
    <property type="evidence" value="ECO:0007669"/>
    <property type="project" value="UniProtKB-KW"/>
</dbReference>
<dbReference type="CDD" id="cd01883">
    <property type="entry name" value="EF1_alpha"/>
    <property type="match status" value="1"/>
</dbReference>
<dbReference type="CDD" id="cd03693">
    <property type="entry name" value="EF1_alpha_II"/>
    <property type="match status" value="1"/>
</dbReference>
<dbReference type="CDD" id="cd03705">
    <property type="entry name" value="EF1_alpha_III"/>
    <property type="match status" value="1"/>
</dbReference>
<dbReference type="FunFam" id="2.40.30.10:FF:000003">
    <property type="entry name" value="Elongation factor 1-alpha"/>
    <property type="match status" value="1"/>
</dbReference>
<dbReference type="FunFam" id="2.40.30.10:FF:000005">
    <property type="entry name" value="Elongation factor 1-alpha"/>
    <property type="match status" value="1"/>
</dbReference>
<dbReference type="FunFam" id="3.40.50.300:FF:000090">
    <property type="entry name" value="Elongation factor 1-alpha"/>
    <property type="match status" value="1"/>
</dbReference>
<dbReference type="Gene3D" id="3.40.50.300">
    <property type="entry name" value="P-loop containing nucleotide triphosphate hydrolases"/>
    <property type="match status" value="1"/>
</dbReference>
<dbReference type="Gene3D" id="2.40.30.10">
    <property type="entry name" value="Translation factors"/>
    <property type="match status" value="2"/>
</dbReference>
<dbReference type="InterPro" id="IPR004161">
    <property type="entry name" value="EFTu-like_2"/>
</dbReference>
<dbReference type="InterPro" id="IPR031157">
    <property type="entry name" value="G_TR_CS"/>
</dbReference>
<dbReference type="InterPro" id="IPR054696">
    <property type="entry name" value="GTP-eEF1A_C"/>
</dbReference>
<dbReference type="InterPro" id="IPR027417">
    <property type="entry name" value="P-loop_NTPase"/>
</dbReference>
<dbReference type="InterPro" id="IPR000795">
    <property type="entry name" value="T_Tr_GTP-bd_dom"/>
</dbReference>
<dbReference type="InterPro" id="IPR050100">
    <property type="entry name" value="TRAFAC_GTPase_members"/>
</dbReference>
<dbReference type="InterPro" id="IPR009000">
    <property type="entry name" value="Transl_B-barrel_sf"/>
</dbReference>
<dbReference type="InterPro" id="IPR009001">
    <property type="entry name" value="Transl_elong_EF1A/Init_IF2_C"/>
</dbReference>
<dbReference type="InterPro" id="IPR004539">
    <property type="entry name" value="Transl_elong_EF1A_euk/arc"/>
</dbReference>
<dbReference type="NCBIfam" id="TIGR00483">
    <property type="entry name" value="EF-1_alpha"/>
    <property type="match status" value="1"/>
</dbReference>
<dbReference type="NCBIfam" id="NF008969">
    <property type="entry name" value="PRK12317.1"/>
    <property type="match status" value="1"/>
</dbReference>
<dbReference type="PANTHER" id="PTHR23115">
    <property type="entry name" value="TRANSLATION FACTOR"/>
    <property type="match status" value="1"/>
</dbReference>
<dbReference type="Pfam" id="PF22594">
    <property type="entry name" value="GTP-eEF1A_C"/>
    <property type="match status" value="1"/>
</dbReference>
<dbReference type="Pfam" id="PF00009">
    <property type="entry name" value="GTP_EFTU"/>
    <property type="match status" value="1"/>
</dbReference>
<dbReference type="Pfam" id="PF03144">
    <property type="entry name" value="GTP_EFTU_D2"/>
    <property type="match status" value="1"/>
</dbReference>
<dbReference type="PRINTS" id="PR00315">
    <property type="entry name" value="ELONGATNFCT"/>
</dbReference>
<dbReference type="SUPFAM" id="SSF50465">
    <property type="entry name" value="EF-Tu/eEF-1alpha/eIF2-gamma C-terminal domain"/>
    <property type="match status" value="1"/>
</dbReference>
<dbReference type="SUPFAM" id="SSF52540">
    <property type="entry name" value="P-loop containing nucleoside triphosphate hydrolases"/>
    <property type="match status" value="1"/>
</dbReference>
<dbReference type="SUPFAM" id="SSF50447">
    <property type="entry name" value="Translation proteins"/>
    <property type="match status" value="1"/>
</dbReference>
<dbReference type="PROSITE" id="PS00301">
    <property type="entry name" value="G_TR_1"/>
    <property type="match status" value="1"/>
</dbReference>
<dbReference type="PROSITE" id="PS51722">
    <property type="entry name" value="G_TR_2"/>
    <property type="match status" value="1"/>
</dbReference>
<keyword id="KW-0963">Cytoplasm</keyword>
<keyword id="KW-0251">Elongation factor</keyword>
<keyword id="KW-0342">GTP-binding</keyword>
<keyword id="KW-0547">Nucleotide-binding</keyword>
<keyword id="KW-0597">Phosphoprotein</keyword>
<keyword id="KW-0648">Protein biosynthesis</keyword>
<protein>
    <recommendedName>
        <fullName>Elongation factor 1-alpha</fullName>
        <shortName>EF-1-alpha</shortName>
    </recommendedName>
</protein>
<sequence length="413" mass="45120">HVDSGKSTTTGHLIYKCGGIDKRTIEKFEKEAQEMGKGSFKYAWVLDKLKAERERGITIDIALWKFETAKYYVTIIDAPGHRDFIKNMITGTSQADCAVLIVAAGTGEFEAGISKNGQTREHALLAFTLGVKQLIVGVNKMDSTEPPYSESRFEEIKKEVSSYIKKIGYNPAAVAFVPISGWHGDNMLEASTKMPWFKGWNVERKEGKAEGKCLIEALDAILPPARPTDKALRLPLQDVYKIGGIGTVPVGRVETGILKPGTIVVFAPANITTEVKSVEMHHEALQEAVPGDNVGFNVKNVSVKELRRGYVAGDSKNNPPKGAADFTAQVIVLNHPGQISNGYTPVLDCHTAHIACKFAEIKEKVDRRTGKSTEDNPKSIKSGDAAIVNLVPSKPLCVESFQEFPPLGRFAVR</sequence>
<organism>
    <name type="scientific">Helicoverpa gelotopoeon</name>
    <dbReference type="NCBI Taxonomy" id="38040"/>
    <lineage>
        <taxon>Eukaryota</taxon>
        <taxon>Metazoa</taxon>
        <taxon>Ecdysozoa</taxon>
        <taxon>Arthropoda</taxon>
        <taxon>Hexapoda</taxon>
        <taxon>Insecta</taxon>
        <taxon>Pterygota</taxon>
        <taxon>Neoptera</taxon>
        <taxon>Endopterygota</taxon>
        <taxon>Lepidoptera</taxon>
        <taxon>Glossata</taxon>
        <taxon>Ditrysia</taxon>
        <taxon>Noctuoidea</taxon>
        <taxon>Noctuidae</taxon>
        <taxon>Heliothinae</taxon>
        <taxon>Helicoverpa</taxon>
    </lineage>
</organism>
<feature type="chain" id="PRO_0000090911" description="Elongation factor 1-alpha">
    <location>
        <begin position="1" status="less than"/>
        <end position="413" status="greater than"/>
    </location>
</feature>
<feature type="domain" description="tr-type G" evidence="2">
    <location>
        <begin position="1" status="less than"/>
        <end position="228"/>
    </location>
</feature>
<feature type="binding site" evidence="1">
    <location>
        <begin position="1" status="less than"/>
        <end position="7"/>
    </location>
    <ligand>
        <name>GTP</name>
        <dbReference type="ChEBI" id="CHEBI:37565"/>
    </ligand>
</feature>
<feature type="binding site" evidence="1">
    <location>
        <begin position="77"/>
        <end position="81"/>
    </location>
    <ligand>
        <name>GTP</name>
        <dbReference type="ChEBI" id="CHEBI:37565"/>
    </ligand>
</feature>
<feature type="binding site" evidence="1">
    <location>
        <begin position="139"/>
        <end position="142"/>
    </location>
    <ligand>
        <name>GTP</name>
        <dbReference type="ChEBI" id="CHEBI:37565"/>
    </ligand>
</feature>
<feature type="modified residue" description="5-glutamyl glycerylphosphorylethanolamine" evidence="1">
    <location>
        <position position="287"/>
    </location>
</feature>
<feature type="modified residue" description="5-glutamyl glycerylphosphorylethanolamine" evidence="1">
    <location>
        <position position="360"/>
    </location>
</feature>
<feature type="non-terminal residue">
    <location>
        <position position="1"/>
    </location>
</feature>
<feature type="non-terminal residue">
    <location>
        <position position="413"/>
    </location>
</feature>